<evidence type="ECO:0000255" key="1">
    <source>
        <dbReference type="HAMAP-Rule" id="MF_00335"/>
    </source>
</evidence>
<evidence type="ECO:0000255" key="2">
    <source>
        <dbReference type="PROSITE-ProRule" id="PRU01175"/>
    </source>
</evidence>
<proteinExistence type="inferred from homology"/>
<comment type="function">
    <text evidence="1">Endoribonuclease that initiates mRNA decay.</text>
</comment>
<comment type="subcellular location">
    <subcellularLocation>
        <location evidence="1">Cell membrane</location>
        <topology evidence="1">Single-pass membrane protein</topology>
    </subcellularLocation>
</comment>
<comment type="similarity">
    <text evidence="1">Belongs to the RNase Y family.</text>
</comment>
<sequence length="519" mass="58512">MNLLSLLLILLGIILGVVGGYVVARNLLLQKQSQARQTAEDIVNQAHKEADNIKKEKLLEAKEENQILREQTEAELRERRSELQRQETRLLQKEENLERKSDLLDKKDEILEQKESKIEEKQQQVDAKESSVQTLIMKHEQELERISGLTQEEAINEQLQRVEEELSQDIAVLVKEKEKEAKEKVDKTAKELLATAVQRLAADHTSESTVSVVNLPNDEMKGRIIGREGRNIRTLETLTGIDLIIDDTPEAVILSGFDPIRREIARTALVNLVSDGRIHPGRIEDMVEKARKEVDDIIREAGEQATFEVNAHNMHPDLVKIVGRLNYRTSYGQNVLKHSIEVAHLASMLAAELGEDETLAKRAGLLHDVGKAIDHEVEGSHVEIGVELAKKYGENETVINAIHSHHGDVEPTSIISILVAAADALSAARPGARKETLENYIRRLERLETLSESYDGVEKAFAIQAGREIRVIVSPEEIDDLKSYRLARDIKNQIEDELQYPGHIKVTVVRETRAVEYAK</sequence>
<dbReference type="EC" id="3.1.-.-" evidence="1"/>
<dbReference type="EMBL" id="CP000255">
    <property type="protein sequence ID" value="ABD21731.1"/>
    <property type="molecule type" value="Genomic_DNA"/>
</dbReference>
<dbReference type="RefSeq" id="WP_001050913.1">
    <property type="nucleotide sequence ID" value="NZ_CP027476.1"/>
</dbReference>
<dbReference type="SMR" id="Q2FHF2"/>
<dbReference type="KEGG" id="saa:SAUSA300_1179"/>
<dbReference type="HOGENOM" id="CLU_028328_1_0_9"/>
<dbReference type="OMA" id="MEYPGQI"/>
<dbReference type="Proteomes" id="UP000001939">
    <property type="component" value="Chromosome"/>
</dbReference>
<dbReference type="GO" id="GO:0005886">
    <property type="term" value="C:plasma membrane"/>
    <property type="evidence" value="ECO:0007669"/>
    <property type="project" value="UniProtKB-SubCell"/>
</dbReference>
<dbReference type="GO" id="GO:0003723">
    <property type="term" value="F:RNA binding"/>
    <property type="evidence" value="ECO:0007669"/>
    <property type="project" value="UniProtKB-UniRule"/>
</dbReference>
<dbReference type="GO" id="GO:0004521">
    <property type="term" value="F:RNA endonuclease activity"/>
    <property type="evidence" value="ECO:0007669"/>
    <property type="project" value="UniProtKB-UniRule"/>
</dbReference>
<dbReference type="GO" id="GO:0006402">
    <property type="term" value="P:mRNA catabolic process"/>
    <property type="evidence" value="ECO:0007669"/>
    <property type="project" value="UniProtKB-UniRule"/>
</dbReference>
<dbReference type="CDD" id="cd00077">
    <property type="entry name" value="HDc"/>
    <property type="match status" value="1"/>
</dbReference>
<dbReference type="CDD" id="cd22431">
    <property type="entry name" value="KH-I_RNaseY"/>
    <property type="match status" value="1"/>
</dbReference>
<dbReference type="FunFam" id="1.10.3210.10:FF:000003">
    <property type="entry name" value="Ribonuclease Y"/>
    <property type="match status" value="1"/>
</dbReference>
<dbReference type="FunFam" id="3.30.1370.10:FF:000006">
    <property type="entry name" value="Ribonuclease Y"/>
    <property type="match status" value="1"/>
</dbReference>
<dbReference type="Gene3D" id="1.10.3210.10">
    <property type="entry name" value="Hypothetical protein af1432"/>
    <property type="match status" value="1"/>
</dbReference>
<dbReference type="Gene3D" id="3.30.1370.10">
    <property type="entry name" value="K Homology domain, type 1"/>
    <property type="match status" value="1"/>
</dbReference>
<dbReference type="HAMAP" id="MF_00335">
    <property type="entry name" value="RNase_Y"/>
    <property type="match status" value="1"/>
</dbReference>
<dbReference type="InterPro" id="IPR003607">
    <property type="entry name" value="HD/PDEase_dom"/>
</dbReference>
<dbReference type="InterPro" id="IPR006674">
    <property type="entry name" value="HD_domain"/>
</dbReference>
<dbReference type="InterPro" id="IPR006675">
    <property type="entry name" value="HDIG_dom"/>
</dbReference>
<dbReference type="InterPro" id="IPR004087">
    <property type="entry name" value="KH_dom"/>
</dbReference>
<dbReference type="InterPro" id="IPR004088">
    <property type="entry name" value="KH_dom_type_1"/>
</dbReference>
<dbReference type="InterPro" id="IPR036612">
    <property type="entry name" value="KH_dom_type_1_sf"/>
</dbReference>
<dbReference type="InterPro" id="IPR017705">
    <property type="entry name" value="Ribonuclease_Y"/>
</dbReference>
<dbReference type="InterPro" id="IPR022711">
    <property type="entry name" value="RNase_Y_N"/>
</dbReference>
<dbReference type="NCBIfam" id="TIGR00277">
    <property type="entry name" value="HDIG"/>
    <property type="match status" value="1"/>
</dbReference>
<dbReference type="NCBIfam" id="TIGR03319">
    <property type="entry name" value="RNase_Y"/>
    <property type="match status" value="1"/>
</dbReference>
<dbReference type="PANTHER" id="PTHR12826">
    <property type="entry name" value="RIBONUCLEASE Y"/>
    <property type="match status" value="1"/>
</dbReference>
<dbReference type="PANTHER" id="PTHR12826:SF15">
    <property type="entry name" value="RIBONUCLEASE Y"/>
    <property type="match status" value="1"/>
</dbReference>
<dbReference type="Pfam" id="PF01966">
    <property type="entry name" value="HD"/>
    <property type="match status" value="1"/>
</dbReference>
<dbReference type="Pfam" id="PF00013">
    <property type="entry name" value="KH_1"/>
    <property type="match status" value="1"/>
</dbReference>
<dbReference type="Pfam" id="PF12072">
    <property type="entry name" value="RNase_Y_N"/>
    <property type="match status" value="1"/>
</dbReference>
<dbReference type="SMART" id="SM00471">
    <property type="entry name" value="HDc"/>
    <property type="match status" value="1"/>
</dbReference>
<dbReference type="SMART" id="SM00322">
    <property type="entry name" value="KH"/>
    <property type="match status" value="1"/>
</dbReference>
<dbReference type="SUPFAM" id="SSF54791">
    <property type="entry name" value="Eukaryotic type KH-domain (KH-domain type I)"/>
    <property type="match status" value="1"/>
</dbReference>
<dbReference type="SUPFAM" id="SSF109604">
    <property type="entry name" value="HD-domain/PDEase-like"/>
    <property type="match status" value="1"/>
</dbReference>
<dbReference type="PROSITE" id="PS51831">
    <property type="entry name" value="HD"/>
    <property type="match status" value="1"/>
</dbReference>
<dbReference type="PROSITE" id="PS50084">
    <property type="entry name" value="KH_TYPE_1"/>
    <property type="match status" value="1"/>
</dbReference>
<keyword id="KW-1003">Cell membrane</keyword>
<keyword id="KW-0255">Endonuclease</keyword>
<keyword id="KW-0378">Hydrolase</keyword>
<keyword id="KW-0472">Membrane</keyword>
<keyword id="KW-0540">Nuclease</keyword>
<keyword id="KW-0694">RNA-binding</keyword>
<keyword id="KW-0812">Transmembrane</keyword>
<keyword id="KW-1133">Transmembrane helix</keyword>
<keyword id="KW-0843">Virulence</keyword>
<feature type="chain" id="PRO_0000294067" description="Ribonuclease Y">
    <location>
        <begin position="1"/>
        <end position="519"/>
    </location>
</feature>
<feature type="transmembrane region" description="Helical" evidence="1">
    <location>
        <begin position="3"/>
        <end position="23"/>
    </location>
</feature>
<feature type="domain" description="KH" evidence="1">
    <location>
        <begin position="209"/>
        <end position="269"/>
    </location>
</feature>
<feature type="domain" description="HD" evidence="2">
    <location>
        <begin position="335"/>
        <end position="428"/>
    </location>
</feature>
<gene>
    <name evidence="1" type="primary">rny</name>
    <name type="synonym">cvfA</name>
    <name type="ordered locus">SAUSA300_1179</name>
</gene>
<protein>
    <recommendedName>
        <fullName evidence="1">Ribonuclease Y</fullName>
        <shortName evidence="1">RNase Y</shortName>
        <ecNumber evidence="1">3.1.-.-</ecNumber>
    </recommendedName>
    <alternativeName>
        <fullName>Conserved virulence factor A</fullName>
    </alternativeName>
</protein>
<organism>
    <name type="scientific">Staphylococcus aureus (strain USA300)</name>
    <dbReference type="NCBI Taxonomy" id="367830"/>
    <lineage>
        <taxon>Bacteria</taxon>
        <taxon>Bacillati</taxon>
        <taxon>Bacillota</taxon>
        <taxon>Bacilli</taxon>
        <taxon>Bacillales</taxon>
        <taxon>Staphylococcaceae</taxon>
        <taxon>Staphylococcus</taxon>
    </lineage>
</organism>
<accession>Q2FHF2</accession>
<name>RNY_STAA3</name>
<reference key="1">
    <citation type="journal article" date="2006" name="Lancet">
        <title>Complete genome sequence of USA300, an epidemic clone of community-acquired meticillin-resistant Staphylococcus aureus.</title>
        <authorList>
            <person name="Diep B.A."/>
            <person name="Gill S.R."/>
            <person name="Chang R.F."/>
            <person name="Phan T.H."/>
            <person name="Chen J.H."/>
            <person name="Davidson M.G."/>
            <person name="Lin F."/>
            <person name="Lin J."/>
            <person name="Carleton H.A."/>
            <person name="Mongodin E.F."/>
            <person name="Sensabaugh G.F."/>
            <person name="Perdreau-Remington F."/>
        </authorList>
    </citation>
    <scope>NUCLEOTIDE SEQUENCE [LARGE SCALE GENOMIC DNA]</scope>
    <source>
        <strain>USA300</strain>
    </source>
</reference>